<organism>
    <name type="scientific">Azobacteroides pseudotrichonymphae genomovar. CFP2</name>
    <dbReference type="NCBI Taxonomy" id="511995"/>
    <lineage>
        <taxon>Bacteria</taxon>
        <taxon>Pseudomonadati</taxon>
        <taxon>Bacteroidota</taxon>
        <taxon>Bacteroidia</taxon>
        <taxon>Bacteroidales</taxon>
        <taxon>Candidatus Azobacteroides</taxon>
    </lineage>
</organism>
<feature type="chain" id="PRO_1000141821" description="Large ribosomal subunit protein uL3">
    <location>
        <begin position="1"/>
        <end position="204"/>
    </location>
</feature>
<sequence>MPGLIGKKIGMTSIFSVEGKNLPCTVMEVGPCVVTQVKTVDKDGYEAVQVGFEDKKEKHTTKPERGHFKRAGVSFKRYLAEFKEQGKYKEGDVITVDFFNKGIYVDVVGISKGKGFQGVVKRHGFRGVGEATLGQSDRQRHPGSIGACSYPAKVFKGTRMAGQMGNTKVTIQNLEVIELISKYNLLIVKGSVPGSKGSILIVKK</sequence>
<accession>B6YQ85</accession>
<comment type="function">
    <text evidence="1">One of the primary rRNA binding proteins, it binds directly near the 3'-end of the 23S rRNA, where it nucleates assembly of the 50S subunit.</text>
</comment>
<comment type="subunit">
    <text evidence="1">Part of the 50S ribosomal subunit. Forms a cluster with proteins L14 and L19.</text>
</comment>
<comment type="similarity">
    <text evidence="1">Belongs to the universal ribosomal protein uL3 family.</text>
</comment>
<keyword id="KW-1185">Reference proteome</keyword>
<keyword id="KW-0687">Ribonucleoprotein</keyword>
<keyword id="KW-0689">Ribosomal protein</keyword>
<keyword id="KW-0694">RNA-binding</keyword>
<keyword id="KW-0699">rRNA-binding</keyword>
<proteinExistence type="inferred from homology"/>
<dbReference type="EMBL" id="AP010656">
    <property type="protein sequence ID" value="BAG83357.1"/>
    <property type="molecule type" value="Genomic_DNA"/>
</dbReference>
<dbReference type="RefSeq" id="WP_012573118.1">
    <property type="nucleotide sequence ID" value="NC_011565.1"/>
</dbReference>
<dbReference type="SMR" id="B6YQ85"/>
<dbReference type="STRING" id="511995.CFPG_094"/>
<dbReference type="KEGG" id="aps:CFPG_094"/>
<dbReference type="eggNOG" id="COG0087">
    <property type="taxonomic scope" value="Bacteria"/>
</dbReference>
<dbReference type="HOGENOM" id="CLU_044142_4_1_10"/>
<dbReference type="OrthoDB" id="9806135at2"/>
<dbReference type="Proteomes" id="UP000000723">
    <property type="component" value="Chromosome"/>
</dbReference>
<dbReference type="GO" id="GO:0022625">
    <property type="term" value="C:cytosolic large ribosomal subunit"/>
    <property type="evidence" value="ECO:0007669"/>
    <property type="project" value="TreeGrafter"/>
</dbReference>
<dbReference type="GO" id="GO:0019843">
    <property type="term" value="F:rRNA binding"/>
    <property type="evidence" value="ECO:0007669"/>
    <property type="project" value="UniProtKB-UniRule"/>
</dbReference>
<dbReference type="GO" id="GO:0003735">
    <property type="term" value="F:structural constituent of ribosome"/>
    <property type="evidence" value="ECO:0007669"/>
    <property type="project" value="InterPro"/>
</dbReference>
<dbReference type="GO" id="GO:0006412">
    <property type="term" value="P:translation"/>
    <property type="evidence" value="ECO:0007669"/>
    <property type="project" value="UniProtKB-UniRule"/>
</dbReference>
<dbReference type="FunFam" id="2.40.30.10:FF:000047">
    <property type="entry name" value="50S ribosomal protein L3"/>
    <property type="match status" value="1"/>
</dbReference>
<dbReference type="FunFam" id="3.30.160.810:FF:000001">
    <property type="entry name" value="50S ribosomal protein L3"/>
    <property type="match status" value="1"/>
</dbReference>
<dbReference type="Gene3D" id="3.30.160.810">
    <property type="match status" value="1"/>
</dbReference>
<dbReference type="Gene3D" id="2.40.30.10">
    <property type="entry name" value="Translation factors"/>
    <property type="match status" value="1"/>
</dbReference>
<dbReference type="HAMAP" id="MF_01325_B">
    <property type="entry name" value="Ribosomal_uL3_B"/>
    <property type="match status" value="1"/>
</dbReference>
<dbReference type="InterPro" id="IPR000597">
    <property type="entry name" value="Ribosomal_uL3"/>
</dbReference>
<dbReference type="InterPro" id="IPR019927">
    <property type="entry name" value="Ribosomal_uL3_bac/org-type"/>
</dbReference>
<dbReference type="InterPro" id="IPR019926">
    <property type="entry name" value="Ribosomal_uL3_CS"/>
</dbReference>
<dbReference type="InterPro" id="IPR009000">
    <property type="entry name" value="Transl_B-barrel_sf"/>
</dbReference>
<dbReference type="NCBIfam" id="TIGR03625">
    <property type="entry name" value="L3_bact"/>
    <property type="match status" value="1"/>
</dbReference>
<dbReference type="PANTHER" id="PTHR11229">
    <property type="entry name" value="50S RIBOSOMAL PROTEIN L3"/>
    <property type="match status" value="1"/>
</dbReference>
<dbReference type="PANTHER" id="PTHR11229:SF16">
    <property type="entry name" value="LARGE RIBOSOMAL SUBUNIT PROTEIN UL3C"/>
    <property type="match status" value="1"/>
</dbReference>
<dbReference type="Pfam" id="PF00297">
    <property type="entry name" value="Ribosomal_L3"/>
    <property type="match status" value="1"/>
</dbReference>
<dbReference type="SUPFAM" id="SSF50447">
    <property type="entry name" value="Translation proteins"/>
    <property type="match status" value="1"/>
</dbReference>
<dbReference type="PROSITE" id="PS00474">
    <property type="entry name" value="RIBOSOMAL_L3"/>
    <property type="match status" value="1"/>
</dbReference>
<gene>
    <name evidence="1" type="primary">rplC</name>
    <name type="ordered locus">CFPG_094</name>
</gene>
<reference key="1">
    <citation type="journal article" date="2008" name="Science">
        <title>Genome of an endosymbiont coupling N2 fixation to cellulolysis within RT protist cells in termite gut.</title>
        <authorList>
            <person name="Hongoh Y."/>
            <person name="Sharma V.K."/>
            <person name="Prakash T."/>
            <person name="Noda S."/>
            <person name="Toh H."/>
            <person name="Taylor T.D."/>
            <person name="Kudo T."/>
            <person name="Sakaki Y."/>
            <person name="Toyoda A."/>
            <person name="Hattori M."/>
            <person name="Ohkuma M."/>
        </authorList>
    </citation>
    <scope>NUCLEOTIDE SEQUENCE [LARGE SCALE GENOMIC DNA]</scope>
</reference>
<protein>
    <recommendedName>
        <fullName evidence="1">Large ribosomal subunit protein uL3</fullName>
    </recommendedName>
    <alternativeName>
        <fullName evidence="2">50S ribosomal protein L3</fullName>
    </alternativeName>
</protein>
<name>RL3_AZOPC</name>
<evidence type="ECO:0000255" key="1">
    <source>
        <dbReference type="HAMAP-Rule" id="MF_01325"/>
    </source>
</evidence>
<evidence type="ECO:0000305" key="2"/>